<keyword id="KW-0256">Endoplasmic reticulum</keyword>
<keyword id="KW-0931">ER-Golgi transport</keyword>
<keyword id="KW-0333">Golgi apparatus</keyword>
<keyword id="KW-0472">Membrane</keyword>
<keyword id="KW-0653">Protein transport</keyword>
<keyword id="KW-1185">Reference proteome</keyword>
<keyword id="KW-0677">Repeat</keyword>
<keyword id="KW-0735">Signal-anchor</keyword>
<keyword id="KW-0749">Sporulation</keyword>
<keyword id="KW-0812">Transmembrane</keyword>
<keyword id="KW-1133">Transmembrane helix</keyword>
<keyword id="KW-0813">Transport</keyword>
<keyword id="KW-0853">WD repeat</keyword>
<feature type="chain" id="PRO_0000051225" description="Membrane glycoprotein spo14">
    <location>
        <begin position="1"/>
        <end position="395"/>
    </location>
</feature>
<feature type="topological domain" description="Cytoplasmic" evidence="1">
    <location>
        <begin position="1"/>
        <end position="346"/>
    </location>
</feature>
<feature type="transmembrane region" description="Helical; Signal-anchor for type II membrane protein" evidence="1">
    <location>
        <begin position="347"/>
        <end position="367"/>
    </location>
</feature>
<feature type="topological domain" description="Lumenal" evidence="1">
    <location>
        <begin position="368"/>
        <end position="395"/>
    </location>
</feature>
<feature type="repeat" description="WD 1">
    <location>
        <begin position="250"/>
        <end position="285"/>
    </location>
</feature>
<feature type="repeat" description="WD 2">
    <location>
        <begin position="290"/>
        <end position="326"/>
    </location>
</feature>
<protein>
    <recommendedName>
        <fullName>Membrane glycoprotein spo14</fullName>
    </recommendedName>
    <alternativeName>
        <fullName>SEC12-like protein</fullName>
    </alternativeName>
    <alternativeName>
        <fullName>Sporulation-specific protein 14</fullName>
    </alternativeName>
</protein>
<comment type="function">
    <text evidence="2 3">Required for the formation of transport vesicles from the ER. This function involves the cytoplasmic domain of the protein, which is thought to interact with the small GTP-binding protein sar1.</text>
</comment>
<comment type="subcellular location">
    <subcellularLocation>
        <location>Endoplasmic reticulum membrane</location>
        <topology>Single-pass type II membrane protein</topology>
    </subcellularLocation>
    <subcellularLocation>
        <location>Golgi apparatus</location>
        <location>cis-Golgi network membrane</location>
        <topology>Single-pass type II membrane protein</topology>
    </subcellularLocation>
    <text>Cycling between endoplasmic reticulum and the early Golgi.</text>
</comment>
<evidence type="ECO:0000255" key="1"/>
<evidence type="ECO:0000269" key="2">
    <source>
    </source>
</evidence>
<evidence type="ECO:0000269" key="3">
    <source>
    </source>
</evidence>
<organism>
    <name type="scientific">Schizosaccharomyces pombe (strain 972 / ATCC 24843)</name>
    <name type="common">Fission yeast</name>
    <dbReference type="NCBI Taxonomy" id="284812"/>
    <lineage>
        <taxon>Eukaryota</taxon>
        <taxon>Fungi</taxon>
        <taxon>Dikarya</taxon>
        <taxon>Ascomycota</taxon>
        <taxon>Taphrinomycotina</taxon>
        <taxon>Schizosaccharomycetes</taxon>
        <taxon>Schizosaccharomycetales</taxon>
        <taxon>Schizosaccharomycetaceae</taxon>
        <taxon>Schizosaccharomyces</taxon>
    </lineage>
</organism>
<proteinExistence type="evidence at transcript level"/>
<sequence>MAELHLSFPAYSLCWINNHQMAVGGGGGTTKSGVKNKLKLLSYEDYEPEVGEGHTKFIEHGEIELKHSDDAVMSLGYFKNELIAGINNTIDGKLIDHLRLYGRKDKLFEEKNALRLTDFDNDEQYQRLCLFEPLHDAICISCTNKSFFIISKNDHKVLFEKHGSDVYDVSSTEDKLAIAVDDRVEIYDWNTFELVQVLYMPVERATVRGVSFLPNQSIVAAYNYIKDSKRFASLVRFDYSSKNQLWRFGMIRDLKNAKGVTCFCCDKENGMIIVAGADCSIRFMSLDLTKLSQVYKHSLPVTDMQLSPDSEALVSVSADGLLCLQFVGKFKNLSAVKLEDAGVILRLSLMFPFVLAILYFYLQLLFPDEKLDAIHRFFSFILHIFSKYTIRNYDL</sequence>
<dbReference type="EMBL" id="M95798">
    <property type="protein sequence ID" value="AAA35345.1"/>
    <property type="molecule type" value="mRNA"/>
</dbReference>
<dbReference type="EMBL" id="AB036755">
    <property type="protein sequence ID" value="BAA89460.1"/>
    <property type="molecule type" value="Genomic_DNA"/>
</dbReference>
<dbReference type="EMBL" id="CU329671">
    <property type="protein sequence ID" value="CAA20297.2"/>
    <property type="molecule type" value="Genomic_DNA"/>
</dbReference>
<dbReference type="PIR" id="S28606">
    <property type="entry name" value="S28606"/>
</dbReference>
<dbReference type="RefSeq" id="XP_001713132.1">
    <property type="nucleotide sequence ID" value="XM_001713080.2"/>
</dbReference>
<dbReference type="SMR" id="Q10659"/>
<dbReference type="BioGRID" id="277512">
    <property type="interactions" value="2"/>
</dbReference>
<dbReference type="FunCoup" id="Q10659">
    <property type="interactions" value="78"/>
</dbReference>
<dbReference type="STRING" id="284812.Q10659"/>
<dbReference type="iPTMnet" id="Q10659"/>
<dbReference type="PaxDb" id="4896-SPBC3H7.01.1"/>
<dbReference type="EnsemblFungi" id="SPBC3H7.01.1">
    <property type="protein sequence ID" value="SPBC3H7.01.1:pep"/>
    <property type="gene ID" value="SPBC3H7.01"/>
</dbReference>
<dbReference type="PomBase" id="SPBC3H7.01">
    <property type="gene designation" value="spo14"/>
</dbReference>
<dbReference type="VEuPathDB" id="FungiDB:SPBC3H7.01"/>
<dbReference type="eggNOG" id="KOG0771">
    <property type="taxonomic scope" value="Eukaryota"/>
</dbReference>
<dbReference type="HOGENOM" id="CLU_706283_0_0_1"/>
<dbReference type="InParanoid" id="Q10659"/>
<dbReference type="OMA" id="RVEIYDW"/>
<dbReference type="Reactome" id="R-SPO-204005">
    <property type="pathway name" value="COPII-mediated vesicle transport"/>
</dbReference>
<dbReference type="PRO" id="PR:Q10659"/>
<dbReference type="Proteomes" id="UP000002485">
    <property type="component" value="Chromosome II"/>
</dbReference>
<dbReference type="GO" id="GO:0005737">
    <property type="term" value="C:cytoplasm"/>
    <property type="evidence" value="ECO:0007005"/>
    <property type="project" value="PomBase"/>
</dbReference>
<dbReference type="GO" id="GO:0005783">
    <property type="term" value="C:endoplasmic reticulum"/>
    <property type="evidence" value="ECO:0007005"/>
    <property type="project" value="PomBase"/>
</dbReference>
<dbReference type="GO" id="GO:0005789">
    <property type="term" value="C:endoplasmic reticulum membrane"/>
    <property type="evidence" value="ECO:0000314"/>
    <property type="project" value="PomBase"/>
</dbReference>
<dbReference type="GO" id="GO:0005794">
    <property type="term" value="C:Golgi apparatus"/>
    <property type="evidence" value="ECO:0007669"/>
    <property type="project" value="UniProtKB-SubCell"/>
</dbReference>
<dbReference type="GO" id="GO:0005886">
    <property type="term" value="C:plasma membrane"/>
    <property type="evidence" value="ECO:0000314"/>
    <property type="project" value="PomBase"/>
</dbReference>
<dbReference type="GO" id="GO:0005085">
    <property type="term" value="F:guanyl-nucleotide exchange factor activity"/>
    <property type="evidence" value="ECO:0000304"/>
    <property type="project" value="PomBase"/>
</dbReference>
<dbReference type="GO" id="GO:0030437">
    <property type="term" value="P:ascospore formation"/>
    <property type="evidence" value="ECO:0000315"/>
    <property type="project" value="PomBase"/>
</dbReference>
<dbReference type="GO" id="GO:0031321">
    <property type="term" value="P:ascospore-type prospore assembly"/>
    <property type="evidence" value="ECO:0000315"/>
    <property type="project" value="PomBase"/>
</dbReference>
<dbReference type="GO" id="GO:0032120">
    <property type="term" value="P:ascospore-type prospore membrane formation"/>
    <property type="evidence" value="ECO:0000315"/>
    <property type="project" value="PomBase"/>
</dbReference>
<dbReference type="GO" id="GO:0006888">
    <property type="term" value="P:endoplasmic reticulum to Golgi vesicle-mediated transport"/>
    <property type="evidence" value="ECO:0000315"/>
    <property type="project" value="PomBase"/>
</dbReference>
<dbReference type="GO" id="GO:0015031">
    <property type="term" value="P:protein transport"/>
    <property type="evidence" value="ECO:0007669"/>
    <property type="project" value="UniProtKB-KW"/>
</dbReference>
<dbReference type="GO" id="GO:0003400">
    <property type="term" value="P:regulation of COPII vesicle coating"/>
    <property type="evidence" value="ECO:0000318"/>
    <property type="project" value="GO_Central"/>
</dbReference>
<dbReference type="Gene3D" id="2.130.10.10">
    <property type="entry name" value="YVTN repeat-like/Quinoprotein amine dehydrogenase"/>
    <property type="match status" value="1"/>
</dbReference>
<dbReference type="InterPro" id="IPR045260">
    <property type="entry name" value="Sec12-like"/>
</dbReference>
<dbReference type="InterPro" id="IPR015943">
    <property type="entry name" value="WD40/YVTN_repeat-like_dom_sf"/>
</dbReference>
<dbReference type="InterPro" id="IPR036322">
    <property type="entry name" value="WD40_repeat_dom_sf"/>
</dbReference>
<dbReference type="InterPro" id="IPR001680">
    <property type="entry name" value="WD40_rpt"/>
</dbReference>
<dbReference type="PANTHER" id="PTHR23284">
    <property type="entry name" value="PROLACTIN REGULATORY ELEMENT BINDING PROTEIN"/>
    <property type="match status" value="1"/>
</dbReference>
<dbReference type="PANTHER" id="PTHR23284:SF0">
    <property type="entry name" value="PROLACTIN REGULATORY ELEMENT-BINDING PROTEIN"/>
    <property type="match status" value="1"/>
</dbReference>
<dbReference type="Pfam" id="PF00400">
    <property type="entry name" value="WD40"/>
    <property type="match status" value="1"/>
</dbReference>
<dbReference type="SMART" id="SM00320">
    <property type="entry name" value="WD40"/>
    <property type="match status" value="3"/>
</dbReference>
<dbReference type="SUPFAM" id="SSF50978">
    <property type="entry name" value="WD40 repeat-like"/>
    <property type="match status" value="1"/>
</dbReference>
<reference key="1">
    <citation type="journal article" date="1992" name="EMBO J.">
        <title>Fission yeast and a plant have functional homologues of the Sar1 and Sec12 proteins involved in ER to Golgi traffic in budding yeast.</title>
        <authorList>
            <person name="d'Enfert C."/>
            <person name="Gensse M."/>
            <person name="Gaillardin C."/>
        </authorList>
    </citation>
    <scope>NUCLEOTIDE SEQUENCE [MRNA]</scope>
    <scope>FUNCTION</scope>
    <scope>SUBCELLULAR LOCATION</scope>
</reference>
<reference key="2">
    <citation type="journal article" date="2003" name="Mol. Biol. Cell">
        <title>The fission yeast spo14(+) gene encoding a functional homologue of budding yeast Sec12 is required for the development of forespore membranes.</title>
        <authorList>
            <person name="Nakamura-Kubo M."/>
            <person name="Nakamura T."/>
            <person name="Hirata A."/>
            <person name="Shimoda C."/>
        </authorList>
    </citation>
    <scope>NUCLEOTIDE SEQUENCE [GENOMIC DNA]</scope>
    <scope>FUNCTION</scope>
    <scope>SUBCELLULAR LOCATION</scope>
</reference>
<reference key="3">
    <citation type="journal article" date="2002" name="Nature">
        <title>The genome sequence of Schizosaccharomyces pombe.</title>
        <authorList>
            <person name="Wood V."/>
            <person name="Gwilliam R."/>
            <person name="Rajandream M.A."/>
            <person name="Lyne M.H."/>
            <person name="Lyne R."/>
            <person name="Stewart A."/>
            <person name="Sgouros J.G."/>
            <person name="Peat N."/>
            <person name="Hayles J."/>
            <person name="Baker S.G."/>
            <person name="Basham D."/>
            <person name="Bowman S."/>
            <person name="Brooks K."/>
            <person name="Brown D."/>
            <person name="Brown S."/>
            <person name="Chillingworth T."/>
            <person name="Churcher C.M."/>
            <person name="Collins M."/>
            <person name="Connor R."/>
            <person name="Cronin A."/>
            <person name="Davis P."/>
            <person name="Feltwell T."/>
            <person name="Fraser A."/>
            <person name="Gentles S."/>
            <person name="Goble A."/>
            <person name="Hamlin N."/>
            <person name="Harris D.E."/>
            <person name="Hidalgo J."/>
            <person name="Hodgson G."/>
            <person name="Holroyd S."/>
            <person name="Hornsby T."/>
            <person name="Howarth S."/>
            <person name="Huckle E.J."/>
            <person name="Hunt S."/>
            <person name="Jagels K."/>
            <person name="James K.D."/>
            <person name="Jones L."/>
            <person name="Jones M."/>
            <person name="Leather S."/>
            <person name="McDonald S."/>
            <person name="McLean J."/>
            <person name="Mooney P."/>
            <person name="Moule S."/>
            <person name="Mungall K.L."/>
            <person name="Murphy L.D."/>
            <person name="Niblett D."/>
            <person name="Odell C."/>
            <person name="Oliver K."/>
            <person name="O'Neil S."/>
            <person name="Pearson D."/>
            <person name="Quail M.A."/>
            <person name="Rabbinowitsch E."/>
            <person name="Rutherford K.M."/>
            <person name="Rutter S."/>
            <person name="Saunders D."/>
            <person name="Seeger K."/>
            <person name="Sharp S."/>
            <person name="Skelton J."/>
            <person name="Simmonds M.N."/>
            <person name="Squares R."/>
            <person name="Squares S."/>
            <person name="Stevens K."/>
            <person name="Taylor K."/>
            <person name="Taylor R.G."/>
            <person name="Tivey A."/>
            <person name="Walsh S.V."/>
            <person name="Warren T."/>
            <person name="Whitehead S."/>
            <person name="Woodward J.R."/>
            <person name="Volckaert G."/>
            <person name="Aert R."/>
            <person name="Robben J."/>
            <person name="Grymonprez B."/>
            <person name="Weltjens I."/>
            <person name="Vanstreels E."/>
            <person name="Rieger M."/>
            <person name="Schaefer M."/>
            <person name="Mueller-Auer S."/>
            <person name="Gabel C."/>
            <person name="Fuchs M."/>
            <person name="Duesterhoeft A."/>
            <person name="Fritzc C."/>
            <person name="Holzer E."/>
            <person name="Moestl D."/>
            <person name="Hilbert H."/>
            <person name="Borzym K."/>
            <person name="Langer I."/>
            <person name="Beck A."/>
            <person name="Lehrach H."/>
            <person name="Reinhardt R."/>
            <person name="Pohl T.M."/>
            <person name="Eger P."/>
            <person name="Zimmermann W."/>
            <person name="Wedler H."/>
            <person name="Wambutt R."/>
            <person name="Purnelle B."/>
            <person name="Goffeau A."/>
            <person name="Cadieu E."/>
            <person name="Dreano S."/>
            <person name="Gloux S."/>
            <person name="Lelaure V."/>
            <person name="Mottier S."/>
            <person name="Galibert F."/>
            <person name="Aves S.J."/>
            <person name="Xiang Z."/>
            <person name="Hunt C."/>
            <person name="Moore K."/>
            <person name="Hurst S.M."/>
            <person name="Lucas M."/>
            <person name="Rochet M."/>
            <person name="Gaillardin C."/>
            <person name="Tallada V.A."/>
            <person name="Garzon A."/>
            <person name="Thode G."/>
            <person name="Daga R.R."/>
            <person name="Cruzado L."/>
            <person name="Jimenez J."/>
            <person name="Sanchez M."/>
            <person name="del Rey F."/>
            <person name="Benito J."/>
            <person name="Dominguez A."/>
            <person name="Revuelta J.L."/>
            <person name="Moreno S."/>
            <person name="Armstrong J."/>
            <person name="Forsburg S.L."/>
            <person name="Cerutti L."/>
            <person name="Lowe T."/>
            <person name="McCombie W.R."/>
            <person name="Paulsen I."/>
            <person name="Potashkin J."/>
            <person name="Shpakovski G.V."/>
            <person name="Ussery D."/>
            <person name="Barrell B.G."/>
            <person name="Nurse P."/>
        </authorList>
    </citation>
    <scope>NUCLEOTIDE SEQUENCE [LARGE SCALE GENOMIC DNA]</scope>
    <source>
        <strain>972 / ATCC 24843</strain>
    </source>
</reference>
<accession>Q10659</accession>
<accession>Q9HFE9</accession>
<gene>
    <name type="primary">spo14</name>
    <name type="synonym">st11</name>
    <name type="synonym">stl1</name>
    <name type="ORF">SPBC3H7.01</name>
    <name type="ORF">SPBP16F5.01c</name>
</gene>
<name>SPO14_SCHPO</name>